<proteinExistence type="evidence at transcript level"/>
<gene>
    <name type="primary">EFHC2</name>
</gene>
<sequence length="746" mass="86661">MALPLLPGFSLGRNVGKEKFHKSQHWGYCNNVAMLLAEDKPGIGGEPLPGQKLIPKSSVFPAELGCGAPAWLAFDKQVLSFDAYFEEEVPDKNQEPYRIRHCKIYFYLEDDTIQVLEPQVKNSGIIQGTIVRRHRIPLPSPNEDQFYTIDHFNINAEVIFYARRYKIIDCDQFTKHFLRKMGFKLNPPGNRPDDPYTKERQKILDSMNPLRPYERIDTLKQFLEHDGHVLRFYCVWDDPESLFHDPRELVLHYYLSDDTIDIKEVIPVNSGRDVVPLFLRRDKLPKYAPTGLYQPGTITSRTVLNVFGNLVGNRGRYILDNRKTGAVHQEFYRDSDLKIGAVINVWGRQIMLCDCDEFTKDYYRTKYGIEDFTPVPYKAPPPPKAEKPIPPYTGFGSEEDSLCSCMSLLPKPPQKDFKKFMEKDRCGLESNTLRFLAKLVTDSPIDKDRKFIICYFLMMPLYSVFEHSQRNTGIIGGKFLEKGRIKKPGQELFKSEPSEYFKAQDLFIGARVCFHGHNFLLVDADEYTINYMEKHANEFAVADTGFIFKKLKDIAEPRSREIRQVFAAADPQHTKVIEYDPFRNLIVSITDGAFSEHEIMTLGRHYGEKEEYEIDHHFLLAKAQEQLKKNSFENFEQLSTILVYNDREKCGALPYETCRTICKSFKLPLSDDLLQTILTMFEDDHKQVNYKKFVDAVNWREHQIPSFHTIKLPPKNEDDWNGQPPFLPVKRIKYLPLLDDLFGKEE</sequence>
<organism>
    <name type="scientific">Gallus gallus</name>
    <name type="common">Chicken</name>
    <dbReference type="NCBI Taxonomy" id="9031"/>
    <lineage>
        <taxon>Eukaryota</taxon>
        <taxon>Metazoa</taxon>
        <taxon>Chordata</taxon>
        <taxon>Craniata</taxon>
        <taxon>Vertebrata</taxon>
        <taxon>Euteleostomi</taxon>
        <taxon>Archelosauria</taxon>
        <taxon>Archosauria</taxon>
        <taxon>Dinosauria</taxon>
        <taxon>Saurischia</taxon>
        <taxon>Theropoda</taxon>
        <taxon>Coelurosauria</taxon>
        <taxon>Aves</taxon>
        <taxon>Neognathae</taxon>
        <taxon>Galloanserae</taxon>
        <taxon>Galliformes</taxon>
        <taxon>Phasianidae</taxon>
        <taxon>Phasianinae</taxon>
        <taxon>Gallus</taxon>
    </lineage>
</organism>
<evidence type="ECO:0000250" key="1">
    <source>
        <dbReference type="UniProtKB" id="A0A3Q1N1R0"/>
    </source>
</evidence>
<evidence type="ECO:0000255" key="2">
    <source>
        <dbReference type="PROSITE-ProRule" id="PRU00665"/>
    </source>
</evidence>
<reference key="1">
    <citation type="journal article" date="2005" name="Epilepsy Res.">
        <title>A new EF-hand containing gene EFHC2 on Xp11.4: tentative evidence for association with juvenile myoclonic epilepsy.</title>
        <authorList>
            <person name="Gu W."/>
            <person name="Sander T."/>
            <person name="Heils A."/>
            <person name="Lenzen K.P."/>
            <person name="Steinlein O.K."/>
        </authorList>
    </citation>
    <scope>NUCLEOTIDE SEQUENCE [MRNA]</scope>
</reference>
<dbReference type="EMBL" id="AY823388">
    <property type="protein sequence ID" value="AAX08043.1"/>
    <property type="molecule type" value="mRNA"/>
</dbReference>
<dbReference type="SMR" id="Q32TG3"/>
<dbReference type="FunCoup" id="Q32TG3">
    <property type="interactions" value="11"/>
</dbReference>
<dbReference type="STRING" id="9031.ENSGALP00000026102"/>
<dbReference type="PaxDb" id="9031-ENSGALP00000026102"/>
<dbReference type="VEuPathDB" id="HostDB:geneid_418559"/>
<dbReference type="eggNOG" id="KOG0043">
    <property type="taxonomic scope" value="Eukaryota"/>
</dbReference>
<dbReference type="InParanoid" id="Q32TG3"/>
<dbReference type="OrthoDB" id="10255210at2759"/>
<dbReference type="PhylomeDB" id="Q32TG3"/>
<dbReference type="TreeFam" id="TF314504"/>
<dbReference type="Proteomes" id="UP000000539">
    <property type="component" value="Unassembled WGS sequence"/>
</dbReference>
<dbReference type="GO" id="GO:0005879">
    <property type="term" value="C:axonemal microtubule"/>
    <property type="evidence" value="ECO:0000250"/>
    <property type="project" value="UniProtKB"/>
</dbReference>
<dbReference type="GO" id="GO:0010975">
    <property type="term" value="P:regulation of neuron projection development"/>
    <property type="evidence" value="ECO:0000318"/>
    <property type="project" value="GO_Central"/>
</dbReference>
<dbReference type="FunFam" id="2.30.29.170:FF:000002">
    <property type="entry name" value="EF-hand domain (C-terminal) containing 1"/>
    <property type="match status" value="1"/>
</dbReference>
<dbReference type="FunFam" id="2.30.29.170:FF:000003">
    <property type="entry name" value="EF-hand domain (C-terminal) containing 1"/>
    <property type="match status" value="1"/>
</dbReference>
<dbReference type="FunFam" id="2.30.29.170:FF:000001">
    <property type="entry name" value="EF-hand domain containing 1"/>
    <property type="match status" value="1"/>
</dbReference>
<dbReference type="FunFam" id="1.10.238.10:FF:000375">
    <property type="entry name" value="EF-hand domain-containing family member C2"/>
    <property type="match status" value="1"/>
</dbReference>
<dbReference type="Gene3D" id="2.30.29.170">
    <property type="match status" value="3"/>
</dbReference>
<dbReference type="Gene3D" id="1.10.238.10">
    <property type="entry name" value="EF-hand"/>
    <property type="match status" value="1"/>
</dbReference>
<dbReference type="InterPro" id="IPR006602">
    <property type="entry name" value="DM10_dom"/>
</dbReference>
<dbReference type="InterPro" id="IPR011992">
    <property type="entry name" value="EF-hand-dom_pair"/>
</dbReference>
<dbReference type="InterPro" id="IPR040193">
    <property type="entry name" value="EFHC1/EFHC2/EFHB"/>
</dbReference>
<dbReference type="PANTHER" id="PTHR12086">
    <property type="entry name" value="EF-HAND DOMAIN C-TERMINAL CONTAINING PROTEIN"/>
    <property type="match status" value="1"/>
</dbReference>
<dbReference type="PANTHER" id="PTHR12086:SF11">
    <property type="entry name" value="EF-HAND DOMAIN-CONTAINING FAMILY MEMBER C2"/>
    <property type="match status" value="1"/>
</dbReference>
<dbReference type="Pfam" id="PF06565">
    <property type="entry name" value="DM10_dom"/>
    <property type="match status" value="4"/>
</dbReference>
<dbReference type="SMART" id="SM00676">
    <property type="entry name" value="DM10"/>
    <property type="match status" value="3"/>
</dbReference>
<dbReference type="SUPFAM" id="SSF47473">
    <property type="entry name" value="EF-hand"/>
    <property type="match status" value="1"/>
</dbReference>
<dbReference type="PROSITE" id="PS51336">
    <property type="entry name" value="DM10"/>
    <property type="match status" value="3"/>
</dbReference>
<feature type="chain" id="PRO_0000251705" description="EF-hand domain-containing family member C2">
    <location>
        <begin position="1"/>
        <end position="746"/>
    </location>
</feature>
<feature type="domain" description="DM10 1" evidence="2">
    <location>
        <begin position="75"/>
        <end position="182"/>
    </location>
</feature>
<feature type="domain" description="DM10 2" evidence="2">
    <location>
        <begin position="226"/>
        <end position="367"/>
    </location>
</feature>
<feature type="domain" description="DM10 3" evidence="2">
    <location>
        <begin position="429"/>
        <end position="536"/>
    </location>
</feature>
<feature type="domain" description="EF-hand">
    <location>
        <begin position="557"/>
        <end position="592"/>
    </location>
</feature>
<comment type="function">
    <text evidence="1">Microtubule inner protein (MIP) part of the dynein-decorated doublet microtubules (DMTs) in cilia axoneme, which is required for motile cilia beating.</text>
</comment>
<comment type="subcellular location">
    <subcellularLocation>
        <location evidence="1">Cytoplasm</location>
        <location evidence="1">Cytoskeleton</location>
        <location evidence="1">Cilium axoneme</location>
    </subcellularLocation>
</comment>
<accession>Q32TG3</accession>
<protein>
    <recommendedName>
        <fullName>EF-hand domain-containing family member C2</fullName>
    </recommendedName>
</protein>
<keyword id="KW-0966">Cell projection</keyword>
<keyword id="KW-0963">Cytoplasm</keyword>
<keyword id="KW-0206">Cytoskeleton</keyword>
<keyword id="KW-1185">Reference proteome</keyword>
<keyword id="KW-0677">Repeat</keyword>
<name>EFHC2_CHICK</name>